<protein>
    <recommendedName>
        <fullName>Uncharacterized protein HI_1436.2</fullName>
    </recommendedName>
</protein>
<organism>
    <name type="scientific">Haemophilus influenzae (strain ATCC 51907 / DSM 11121 / KW20 / Rd)</name>
    <dbReference type="NCBI Taxonomy" id="71421"/>
    <lineage>
        <taxon>Bacteria</taxon>
        <taxon>Pseudomonadati</taxon>
        <taxon>Pseudomonadota</taxon>
        <taxon>Gammaproteobacteria</taxon>
        <taxon>Pasteurellales</taxon>
        <taxon>Pasteurellaceae</taxon>
        <taxon>Haemophilus</taxon>
    </lineage>
</organism>
<sequence>MELSFIHGKNCLPLYCILLELLKNYFKLGPVDFSLSLRKILATLNPQEIPKLFI</sequence>
<gene>
    <name type="ordered locus">HI_1436.2</name>
</gene>
<feature type="chain" id="PRO_0000078059" description="Uncharacterized protein HI_1436.2">
    <location>
        <begin position="1"/>
        <end position="54"/>
    </location>
</feature>
<proteinExistence type="predicted"/>
<name>Y143B_HAEIN</name>
<keyword id="KW-1185">Reference proteome</keyword>
<reference key="1">
    <citation type="journal article" date="1995" name="Science">
        <title>Whole-genome random sequencing and assembly of Haemophilus influenzae Rd.</title>
        <authorList>
            <person name="Fleischmann R.D."/>
            <person name="Adams M.D."/>
            <person name="White O."/>
            <person name="Clayton R.A."/>
            <person name="Kirkness E.F."/>
            <person name="Kerlavage A.R."/>
            <person name="Bult C.J."/>
            <person name="Tomb J.-F."/>
            <person name="Dougherty B.A."/>
            <person name="Merrick J.M."/>
            <person name="McKenney K."/>
            <person name="Sutton G.G."/>
            <person name="FitzHugh W."/>
            <person name="Fields C.A."/>
            <person name="Gocayne J.D."/>
            <person name="Scott J.D."/>
            <person name="Shirley R."/>
            <person name="Liu L.-I."/>
            <person name="Glodek A."/>
            <person name="Kelley J.M."/>
            <person name="Weidman J.F."/>
            <person name="Phillips C.A."/>
            <person name="Spriggs T."/>
            <person name="Hedblom E."/>
            <person name="Cotton M.D."/>
            <person name="Utterback T.R."/>
            <person name="Hanna M.C."/>
            <person name="Nguyen D.T."/>
            <person name="Saudek D.M."/>
            <person name="Brandon R.C."/>
            <person name="Fine L.D."/>
            <person name="Fritchman J.L."/>
            <person name="Fuhrmann J.L."/>
            <person name="Geoghagen N.S.M."/>
            <person name="Gnehm C.L."/>
            <person name="McDonald L.A."/>
            <person name="Small K.V."/>
            <person name="Fraser C.M."/>
            <person name="Smith H.O."/>
            <person name="Venter J.C."/>
        </authorList>
    </citation>
    <scope>NUCLEOTIDE SEQUENCE [LARGE SCALE GENOMIC DNA]</scope>
    <source>
        <strain>ATCC 51907 / DSM 11121 / KW20 / Rd</strain>
    </source>
</reference>
<reference key="2">
    <citation type="submission" date="1998-05" db="EMBL/GenBank/DDBJ databases">
        <authorList>
            <person name="White O."/>
            <person name="Clayton R.A."/>
            <person name="Kerlavage A.R."/>
            <person name="Fleischmann R.D."/>
            <person name="Peterson J."/>
            <person name="Hickey E."/>
            <person name="Dodson R."/>
            <person name="Gwinn M."/>
        </authorList>
    </citation>
    <scope>IDENTIFICATION</scope>
</reference>
<accession>O86239</accession>
<dbReference type="EMBL" id="L42023">
    <property type="protein sequence ID" value="AAC23091.1"/>
    <property type="molecule type" value="Genomic_DNA"/>
</dbReference>
<dbReference type="SMR" id="O86239"/>
<dbReference type="STRING" id="71421.HI_1436.2"/>
<dbReference type="EnsemblBacteria" id="AAC23091">
    <property type="protein sequence ID" value="AAC23091"/>
    <property type="gene ID" value="HI_1436.2"/>
</dbReference>
<dbReference type="KEGG" id="hin:HI_1436.2"/>
<dbReference type="HOGENOM" id="CLU_3043977_0_0_6"/>
<dbReference type="Proteomes" id="UP000000579">
    <property type="component" value="Chromosome"/>
</dbReference>